<proteinExistence type="inferred from homology"/>
<dbReference type="EMBL" id="CR380955">
    <property type="protein sequence ID" value="CAG60241.1"/>
    <property type="molecule type" value="Genomic_DNA"/>
</dbReference>
<dbReference type="RefSeq" id="XP_447304.1">
    <property type="nucleotide sequence ID" value="XM_447304.1"/>
</dbReference>
<dbReference type="SMR" id="Q6FR40"/>
<dbReference type="FunCoup" id="Q6FR40">
    <property type="interactions" value="108"/>
</dbReference>
<dbReference type="EnsemblFungi" id="CAGL0I01144g-T">
    <property type="protein sequence ID" value="CAGL0I01144g-T-p1"/>
    <property type="gene ID" value="CAGL0I01144g"/>
</dbReference>
<dbReference type="KEGG" id="cgr:2889335"/>
<dbReference type="CGD" id="CAL0132214">
    <property type="gene designation" value="CAGL0I01144g"/>
</dbReference>
<dbReference type="VEuPathDB" id="FungiDB:CAGL0I01144g"/>
<dbReference type="eggNOG" id="ENOG502S40T">
    <property type="taxonomic scope" value="Eukaryota"/>
</dbReference>
<dbReference type="HOGENOM" id="CLU_1475537_0_0_1"/>
<dbReference type="InParanoid" id="Q6FR40"/>
<dbReference type="OMA" id="FAVWKIT"/>
<dbReference type="Proteomes" id="UP000002428">
    <property type="component" value="Chromosome I"/>
</dbReference>
<dbReference type="GO" id="GO:0010008">
    <property type="term" value="C:endosome membrane"/>
    <property type="evidence" value="ECO:0007669"/>
    <property type="project" value="UniProtKB-SubCell"/>
</dbReference>
<dbReference type="GO" id="GO:0071561">
    <property type="term" value="C:nucleus-vacuole junction"/>
    <property type="evidence" value="ECO:0007669"/>
    <property type="project" value="EnsemblFungi"/>
</dbReference>
<dbReference type="GO" id="GO:0005774">
    <property type="term" value="C:vacuolar membrane"/>
    <property type="evidence" value="ECO:0007669"/>
    <property type="project" value="UniProtKB-SubCell"/>
</dbReference>
<dbReference type="GO" id="GO:0032266">
    <property type="term" value="F:phosphatidylinositol-3-phosphate binding"/>
    <property type="evidence" value="ECO:0007669"/>
    <property type="project" value="EnsemblFungi"/>
</dbReference>
<dbReference type="GO" id="GO:0030674">
    <property type="term" value="F:protein-macromolecule adaptor activity"/>
    <property type="evidence" value="ECO:0000250"/>
    <property type="project" value="UniProtKB"/>
</dbReference>
<dbReference type="GO" id="GO:0036010">
    <property type="term" value="P:protein localization to endosome"/>
    <property type="evidence" value="ECO:0007669"/>
    <property type="project" value="EnsemblFungi"/>
</dbReference>
<dbReference type="GO" id="GO:0072657">
    <property type="term" value="P:protein localization to membrane"/>
    <property type="evidence" value="ECO:0000250"/>
    <property type="project" value="UniProtKB"/>
</dbReference>
<dbReference type="CDD" id="cd07280">
    <property type="entry name" value="PX_YPT35"/>
    <property type="match status" value="1"/>
</dbReference>
<dbReference type="Gene3D" id="3.30.1520.10">
    <property type="entry name" value="Phox-like domain"/>
    <property type="match status" value="1"/>
</dbReference>
<dbReference type="InterPro" id="IPR001683">
    <property type="entry name" value="PX_dom"/>
</dbReference>
<dbReference type="InterPro" id="IPR036871">
    <property type="entry name" value="PX_dom_sf"/>
</dbReference>
<dbReference type="InterPro" id="IPR037917">
    <property type="entry name" value="Ypt35_PX"/>
</dbReference>
<dbReference type="Pfam" id="PF00787">
    <property type="entry name" value="PX"/>
    <property type="match status" value="1"/>
</dbReference>
<dbReference type="SMART" id="SM00312">
    <property type="entry name" value="PX"/>
    <property type="match status" value="1"/>
</dbReference>
<dbReference type="SUPFAM" id="SSF64268">
    <property type="entry name" value="PX domain"/>
    <property type="match status" value="1"/>
</dbReference>
<dbReference type="PROSITE" id="PS50195">
    <property type="entry name" value="PX"/>
    <property type="match status" value="1"/>
</dbReference>
<name>YPT35_CANGA</name>
<gene>
    <name type="primary">YPT35</name>
    <name type="ordered locus">CAGL0I01144g</name>
</gene>
<organism>
    <name type="scientific">Candida glabrata (strain ATCC 2001 / BCRC 20586 / JCM 3761 / NBRC 0622 / NRRL Y-65 / CBS 138)</name>
    <name type="common">Yeast</name>
    <name type="synonym">Nakaseomyces glabratus</name>
    <dbReference type="NCBI Taxonomy" id="284593"/>
    <lineage>
        <taxon>Eukaryota</taxon>
        <taxon>Fungi</taxon>
        <taxon>Dikarya</taxon>
        <taxon>Ascomycota</taxon>
        <taxon>Saccharomycotina</taxon>
        <taxon>Saccharomycetes</taxon>
        <taxon>Saccharomycetales</taxon>
        <taxon>Saccharomycetaceae</taxon>
        <taxon>Nakaseomyces</taxon>
    </lineage>
</organism>
<comment type="function">
    <text evidence="1">Recruits the lipid transfer protein VPS13 to endosomal and vacuolar membranes.</text>
</comment>
<comment type="subcellular location">
    <subcellularLocation>
        <location evidence="1">Endosome membrane</location>
        <topology evidence="1">Peripheral membrane protein</topology>
    </subcellularLocation>
    <subcellularLocation>
        <location evidence="1">Vacuole membrane</location>
        <topology evidence="1">Peripheral membrane protein</topology>
    </subcellularLocation>
</comment>
<comment type="domain">
    <text evidence="1">The PX domain binds phosphatidylinositol 3-phosphate (PtdIns(3)P) which is necessary for peripheral membrane localization.</text>
</comment>
<comment type="similarity">
    <text evidence="3">Belongs to the YPT35 family.</text>
</comment>
<evidence type="ECO:0000250" key="1">
    <source>
        <dbReference type="UniProtKB" id="P38815"/>
    </source>
</evidence>
<evidence type="ECO:0000255" key="2">
    <source>
        <dbReference type="PROSITE-ProRule" id="PRU00147"/>
    </source>
</evidence>
<evidence type="ECO:0000305" key="3"/>
<feature type="chain" id="PRO_0000333493" description="Endosomal/vacuolar adapter protein YPT35">
    <location>
        <begin position="1"/>
        <end position="173"/>
    </location>
</feature>
<feature type="domain" description="PX" evidence="2">
    <location>
        <begin position="40"/>
        <end position="173"/>
    </location>
</feature>
<keyword id="KW-0967">Endosome</keyword>
<keyword id="KW-0472">Membrane</keyword>
<keyword id="KW-1185">Reference proteome</keyword>
<keyword id="KW-0926">Vacuole</keyword>
<accession>Q6FR40</accession>
<sequence length="173" mass="20009">MADKVAVLDPEPITLLDTEDEPGISQSRRSSIANSNFYIERAFVTNCTIISGERSTPKFAVWKVTAVLHPLNPNSSGSYRIHTYKRYSDFVEFRNALLDRVRTKRPASVSEIPELPPPVKWYYSWKYNEINLNKEWLANRRKGLELFINQVLLNGNIVDIAKDLVIQFLRPRK</sequence>
<reference key="1">
    <citation type="journal article" date="2004" name="Nature">
        <title>Genome evolution in yeasts.</title>
        <authorList>
            <person name="Dujon B."/>
            <person name="Sherman D."/>
            <person name="Fischer G."/>
            <person name="Durrens P."/>
            <person name="Casaregola S."/>
            <person name="Lafontaine I."/>
            <person name="de Montigny J."/>
            <person name="Marck C."/>
            <person name="Neuveglise C."/>
            <person name="Talla E."/>
            <person name="Goffard N."/>
            <person name="Frangeul L."/>
            <person name="Aigle M."/>
            <person name="Anthouard V."/>
            <person name="Babour A."/>
            <person name="Barbe V."/>
            <person name="Barnay S."/>
            <person name="Blanchin S."/>
            <person name="Beckerich J.-M."/>
            <person name="Beyne E."/>
            <person name="Bleykasten C."/>
            <person name="Boisrame A."/>
            <person name="Boyer J."/>
            <person name="Cattolico L."/>
            <person name="Confanioleri F."/>
            <person name="de Daruvar A."/>
            <person name="Despons L."/>
            <person name="Fabre E."/>
            <person name="Fairhead C."/>
            <person name="Ferry-Dumazet H."/>
            <person name="Groppi A."/>
            <person name="Hantraye F."/>
            <person name="Hennequin C."/>
            <person name="Jauniaux N."/>
            <person name="Joyet P."/>
            <person name="Kachouri R."/>
            <person name="Kerrest A."/>
            <person name="Koszul R."/>
            <person name="Lemaire M."/>
            <person name="Lesur I."/>
            <person name="Ma L."/>
            <person name="Muller H."/>
            <person name="Nicaud J.-M."/>
            <person name="Nikolski M."/>
            <person name="Oztas S."/>
            <person name="Ozier-Kalogeropoulos O."/>
            <person name="Pellenz S."/>
            <person name="Potier S."/>
            <person name="Richard G.-F."/>
            <person name="Straub M.-L."/>
            <person name="Suleau A."/>
            <person name="Swennen D."/>
            <person name="Tekaia F."/>
            <person name="Wesolowski-Louvel M."/>
            <person name="Westhof E."/>
            <person name="Wirth B."/>
            <person name="Zeniou-Meyer M."/>
            <person name="Zivanovic Y."/>
            <person name="Bolotin-Fukuhara M."/>
            <person name="Thierry A."/>
            <person name="Bouchier C."/>
            <person name="Caudron B."/>
            <person name="Scarpelli C."/>
            <person name="Gaillardin C."/>
            <person name="Weissenbach J."/>
            <person name="Wincker P."/>
            <person name="Souciet J.-L."/>
        </authorList>
    </citation>
    <scope>NUCLEOTIDE SEQUENCE [LARGE SCALE GENOMIC DNA]</scope>
    <source>
        <strain>ATCC 2001 / BCRC 20586 / JCM 3761 / NBRC 0622 / NRRL Y-65 / CBS 138</strain>
    </source>
</reference>
<protein>
    <recommendedName>
        <fullName evidence="3">Endosomal/vacuolar adapter protein YPT35</fullName>
    </recommendedName>
    <alternativeName>
        <fullName evidence="3">PX domain-containing protein YPT35</fullName>
    </alternativeName>
</protein>